<proteinExistence type="inferred from homology"/>
<evidence type="ECO:0000255" key="1">
    <source>
        <dbReference type="HAMAP-Rule" id="MF_00563"/>
    </source>
</evidence>
<dbReference type="EC" id="3.13.2.1" evidence="1"/>
<dbReference type="EMBL" id="CP001052">
    <property type="protein sequence ID" value="ACD18146.1"/>
    <property type="molecule type" value="Genomic_DNA"/>
</dbReference>
<dbReference type="RefSeq" id="WP_012434674.1">
    <property type="nucleotide sequence ID" value="NC_010681.1"/>
</dbReference>
<dbReference type="SMR" id="B2T6X2"/>
<dbReference type="STRING" id="398527.Bphyt_3758"/>
<dbReference type="KEGG" id="bpy:Bphyt_3758"/>
<dbReference type="eggNOG" id="COG0499">
    <property type="taxonomic scope" value="Bacteria"/>
</dbReference>
<dbReference type="HOGENOM" id="CLU_025194_2_1_4"/>
<dbReference type="OrthoDB" id="9802717at2"/>
<dbReference type="UniPathway" id="UPA00314">
    <property type="reaction ID" value="UER00076"/>
</dbReference>
<dbReference type="Proteomes" id="UP000001739">
    <property type="component" value="Chromosome 1"/>
</dbReference>
<dbReference type="GO" id="GO:0005829">
    <property type="term" value="C:cytosol"/>
    <property type="evidence" value="ECO:0007669"/>
    <property type="project" value="TreeGrafter"/>
</dbReference>
<dbReference type="GO" id="GO:0004013">
    <property type="term" value="F:adenosylhomocysteinase activity"/>
    <property type="evidence" value="ECO:0007669"/>
    <property type="project" value="UniProtKB-UniRule"/>
</dbReference>
<dbReference type="GO" id="GO:0071269">
    <property type="term" value="P:L-homocysteine biosynthetic process"/>
    <property type="evidence" value="ECO:0007669"/>
    <property type="project" value="UniProtKB-UniRule"/>
</dbReference>
<dbReference type="GO" id="GO:0006730">
    <property type="term" value="P:one-carbon metabolic process"/>
    <property type="evidence" value="ECO:0007669"/>
    <property type="project" value="UniProtKB-KW"/>
</dbReference>
<dbReference type="GO" id="GO:0033353">
    <property type="term" value="P:S-adenosylmethionine cycle"/>
    <property type="evidence" value="ECO:0007669"/>
    <property type="project" value="TreeGrafter"/>
</dbReference>
<dbReference type="CDD" id="cd00401">
    <property type="entry name" value="SAHH"/>
    <property type="match status" value="1"/>
</dbReference>
<dbReference type="FunFam" id="3.40.50.720:FF:000004">
    <property type="entry name" value="Adenosylhomocysteinase"/>
    <property type="match status" value="1"/>
</dbReference>
<dbReference type="Gene3D" id="3.40.50.1480">
    <property type="entry name" value="Adenosylhomocysteinase-like"/>
    <property type="match status" value="1"/>
</dbReference>
<dbReference type="Gene3D" id="3.40.50.720">
    <property type="entry name" value="NAD(P)-binding Rossmann-like Domain"/>
    <property type="match status" value="1"/>
</dbReference>
<dbReference type="HAMAP" id="MF_00563">
    <property type="entry name" value="AdoHcyase"/>
    <property type="match status" value="1"/>
</dbReference>
<dbReference type="InterPro" id="IPR042172">
    <property type="entry name" value="Adenosylhomocyst_ase-like_sf"/>
</dbReference>
<dbReference type="InterPro" id="IPR000043">
    <property type="entry name" value="Adenosylhomocysteinase-like"/>
</dbReference>
<dbReference type="InterPro" id="IPR015878">
    <property type="entry name" value="Ado_hCys_hydrolase_NAD-bd"/>
</dbReference>
<dbReference type="InterPro" id="IPR036291">
    <property type="entry name" value="NAD(P)-bd_dom_sf"/>
</dbReference>
<dbReference type="InterPro" id="IPR020082">
    <property type="entry name" value="S-Ado-L-homoCys_hydrolase_CS"/>
</dbReference>
<dbReference type="NCBIfam" id="TIGR00936">
    <property type="entry name" value="ahcY"/>
    <property type="match status" value="1"/>
</dbReference>
<dbReference type="NCBIfam" id="NF004005">
    <property type="entry name" value="PRK05476.2-3"/>
    <property type="match status" value="1"/>
</dbReference>
<dbReference type="PANTHER" id="PTHR23420">
    <property type="entry name" value="ADENOSYLHOMOCYSTEINASE"/>
    <property type="match status" value="1"/>
</dbReference>
<dbReference type="PANTHER" id="PTHR23420:SF0">
    <property type="entry name" value="ADENOSYLHOMOCYSTEINASE"/>
    <property type="match status" value="1"/>
</dbReference>
<dbReference type="Pfam" id="PF05221">
    <property type="entry name" value="AdoHcyase"/>
    <property type="match status" value="1"/>
</dbReference>
<dbReference type="Pfam" id="PF00670">
    <property type="entry name" value="AdoHcyase_NAD"/>
    <property type="match status" value="1"/>
</dbReference>
<dbReference type="PIRSF" id="PIRSF001109">
    <property type="entry name" value="Ad_hcy_hydrolase"/>
    <property type="match status" value="1"/>
</dbReference>
<dbReference type="SMART" id="SM00996">
    <property type="entry name" value="AdoHcyase"/>
    <property type="match status" value="1"/>
</dbReference>
<dbReference type="SMART" id="SM00997">
    <property type="entry name" value="AdoHcyase_NAD"/>
    <property type="match status" value="1"/>
</dbReference>
<dbReference type="SUPFAM" id="SSF52283">
    <property type="entry name" value="Formate/glycerate dehydrogenase catalytic domain-like"/>
    <property type="match status" value="1"/>
</dbReference>
<dbReference type="SUPFAM" id="SSF51735">
    <property type="entry name" value="NAD(P)-binding Rossmann-fold domains"/>
    <property type="match status" value="1"/>
</dbReference>
<dbReference type="PROSITE" id="PS00738">
    <property type="entry name" value="ADOHCYASE_1"/>
    <property type="match status" value="1"/>
</dbReference>
<dbReference type="PROSITE" id="PS00739">
    <property type="entry name" value="ADOHCYASE_2"/>
    <property type="match status" value="1"/>
</dbReference>
<accession>B2T6X2</accession>
<gene>
    <name evidence="1" type="primary">ahcY</name>
    <name type="ordered locus">Bphyt_3758</name>
</gene>
<sequence>MNAAVIDSKNSQDFVVADMSLADWGRKELNIAETEMPGLVQTREEYKAQQPLKGARIAGSLHMTIQTGVLIETLTALGADVRWASCNIFSTQDHAAAAIAKAGTPVFAFKGESLDEYWEFSHRIFEWPNGEFANMILDDGGDATLLLILGSKAEKDRSVISKPTNEEEVALYKSIASHLDADPTWYSTRLAHIQGVTEETTTGVHRLYQMEKEGRLPFPAINVNDSVTKSKFDNLYGCRESLVDGIKRATDVMIAGKIAVVAGYGDVGKGCAQSLRGLGATVWVTEIDPICALQAAMEGYRVVTMEYAADKADIFVTATGNYHVIGHDHMKAMRHNAIVCNIGHFDSEIDVASTRQYQWDNIKPQVDHIIFPDGKRVILLAEGRLVNLGCATGHPSFVMSNSFTNQTLAQIELFTQGEKYENKVYVLPKHLDEKVARLHLARIGANLTVLSDDQAGYIGVDKNGPFKPNHYRY</sequence>
<name>SAHH_PARPJ</name>
<reference key="1">
    <citation type="journal article" date="2011" name="J. Bacteriol.">
        <title>Complete genome sequence of the plant growth-promoting endophyte Burkholderia phytofirmans strain PsJN.</title>
        <authorList>
            <person name="Weilharter A."/>
            <person name="Mitter B."/>
            <person name="Shin M.V."/>
            <person name="Chain P.S."/>
            <person name="Nowak J."/>
            <person name="Sessitsch A."/>
        </authorList>
    </citation>
    <scope>NUCLEOTIDE SEQUENCE [LARGE SCALE GENOMIC DNA]</scope>
    <source>
        <strain>DSM 17436 / LMG 22146 / PsJN</strain>
    </source>
</reference>
<protein>
    <recommendedName>
        <fullName evidence="1">Adenosylhomocysteinase</fullName>
        <ecNumber evidence="1">3.13.2.1</ecNumber>
    </recommendedName>
    <alternativeName>
        <fullName evidence="1">S-adenosyl-L-homocysteine hydrolase</fullName>
        <shortName evidence="1">AdoHcyase</shortName>
    </alternativeName>
</protein>
<keyword id="KW-0963">Cytoplasm</keyword>
<keyword id="KW-0378">Hydrolase</keyword>
<keyword id="KW-0520">NAD</keyword>
<keyword id="KW-0554">One-carbon metabolism</keyword>
<feature type="chain" id="PRO_1000129274" description="Adenosylhomocysteinase">
    <location>
        <begin position="1"/>
        <end position="473"/>
    </location>
</feature>
<feature type="binding site" evidence="1">
    <location>
        <position position="64"/>
    </location>
    <ligand>
        <name>substrate</name>
    </ligand>
</feature>
<feature type="binding site" evidence="1">
    <location>
        <position position="139"/>
    </location>
    <ligand>
        <name>substrate</name>
    </ligand>
</feature>
<feature type="binding site" evidence="1">
    <location>
        <position position="199"/>
    </location>
    <ligand>
        <name>substrate</name>
    </ligand>
</feature>
<feature type="binding site" evidence="1">
    <location>
        <begin position="200"/>
        <end position="202"/>
    </location>
    <ligand>
        <name>NAD(+)</name>
        <dbReference type="ChEBI" id="CHEBI:57540"/>
    </ligand>
</feature>
<feature type="binding site" evidence="1">
    <location>
        <position position="229"/>
    </location>
    <ligand>
        <name>substrate</name>
    </ligand>
</feature>
<feature type="binding site" evidence="1">
    <location>
        <position position="233"/>
    </location>
    <ligand>
        <name>substrate</name>
    </ligand>
</feature>
<feature type="binding site" evidence="1">
    <location>
        <position position="234"/>
    </location>
    <ligand>
        <name>NAD(+)</name>
        <dbReference type="ChEBI" id="CHEBI:57540"/>
    </ligand>
</feature>
<feature type="binding site" evidence="1">
    <location>
        <begin position="263"/>
        <end position="268"/>
    </location>
    <ligand>
        <name>NAD(+)</name>
        <dbReference type="ChEBI" id="CHEBI:57540"/>
    </ligand>
</feature>
<feature type="binding site" evidence="1">
    <location>
        <position position="286"/>
    </location>
    <ligand>
        <name>NAD(+)</name>
        <dbReference type="ChEBI" id="CHEBI:57540"/>
    </ligand>
</feature>
<feature type="binding site" evidence="1">
    <location>
        <position position="321"/>
    </location>
    <ligand>
        <name>NAD(+)</name>
        <dbReference type="ChEBI" id="CHEBI:57540"/>
    </ligand>
</feature>
<feature type="binding site" evidence="1">
    <location>
        <begin position="342"/>
        <end position="344"/>
    </location>
    <ligand>
        <name>NAD(+)</name>
        <dbReference type="ChEBI" id="CHEBI:57540"/>
    </ligand>
</feature>
<feature type="binding site" evidence="1">
    <location>
        <position position="387"/>
    </location>
    <ligand>
        <name>NAD(+)</name>
        <dbReference type="ChEBI" id="CHEBI:57540"/>
    </ligand>
</feature>
<comment type="function">
    <text evidence="1">May play a key role in the regulation of the intracellular concentration of adenosylhomocysteine.</text>
</comment>
<comment type="catalytic activity">
    <reaction evidence="1">
        <text>S-adenosyl-L-homocysteine + H2O = L-homocysteine + adenosine</text>
        <dbReference type="Rhea" id="RHEA:21708"/>
        <dbReference type="ChEBI" id="CHEBI:15377"/>
        <dbReference type="ChEBI" id="CHEBI:16335"/>
        <dbReference type="ChEBI" id="CHEBI:57856"/>
        <dbReference type="ChEBI" id="CHEBI:58199"/>
        <dbReference type="EC" id="3.13.2.1"/>
    </reaction>
</comment>
<comment type="cofactor">
    <cofactor evidence="1">
        <name>NAD(+)</name>
        <dbReference type="ChEBI" id="CHEBI:57540"/>
    </cofactor>
    <text evidence="1">Binds 1 NAD(+) per subunit.</text>
</comment>
<comment type="pathway">
    <text evidence="1">Amino-acid biosynthesis; L-homocysteine biosynthesis; L-homocysteine from S-adenosyl-L-homocysteine: step 1/1.</text>
</comment>
<comment type="subcellular location">
    <subcellularLocation>
        <location evidence="1">Cytoplasm</location>
    </subcellularLocation>
</comment>
<comment type="similarity">
    <text evidence="1">Belongs to the adenosylhomocysteinase family.</text>
</comment>
<organism>
    <name type="scientific">Paraburkholderia phytofirmans (strain DSM 17436 / LMG 22146 / PsJN)</name>
    <name type="common">Burkholderia phytofirmans</name>
    <dbReference type="NCBI Taxonomy" id="398527"/>
    <lineage>
        <taxon>Bacteria</taxon>
        <taxon>Pseudomonadati</taxon>
        <taxon>Pseudomonadota</taxon>
        <taxon>Betaproteobacteria</taxon>
        <taxon>Burkholderiales</taxon>
        <taxon>Burkholderiaceae</taxon>
        <taxon>Paraburkholderia</taxon>
    </lineage>
</organism>